<evidence type="ECO:0000250" key="1"/>
<evidence type="ECO:0000255" key="2">
    <source>
        <dbReference type="PROSITE-ProRule" id="PRU10001"/>
    </source>
</evidence>
<evidence type="ECO:0000305" key="3"/>
<dbReference type="EC" id="1.1.1.100"/>
<dbReference type="EMBL" id="U39441">
    <property type="protein sequence ID" value="AAC43589.1"/>
    <property type="molecule type" value="Genomic_DNA"/>
</dbReference>
<dbReference type="PIR" id="T12051">
    <property type="entry name" value="T12051"/>
</dbReference>
<dbReference type="SMR" id="P55336"/>
<dbReference type="STRING" id="669.AL538_03895"/>
<dbReference type="UniPathway" id="UPA00094"/>
<dbReference type="GO" id="GO:0004316">
    <property type="term" value="F:3-oxoacyl-[acyl-carrier-protein] reductase (NADPH) activity"/>
    <property type="evidence" value="ECO:0000250"/>
    <property type="project" value="UniProtKB"/>
</dbReference>
<dbReference type="GO" id="GO:0051287">
    <property type="term" value="F:NAD binding"/>
    <property type="evidence" value="ECO:0007669"/>
    <property type="project" value="InterPro"/>
</dbReference>
<dbReference type="GO" id="GO:0050661">
    <property type="term" value="F:NADP binding"/>
    <property type="evidence" value="ECO:0000250"/>
    <property type="project" value="UniProtKB"/>
</dbReference>
<dbReference type="GO" id="GO:0030497">
    <property type="term" value="P:fatty acid elongation"/>
    <property type="evidence" value="ECO:0000250"/>
    <property type="project" value="UniProtKB"/>
</dbReference>
<dbReference type="CDD" id="cd05333">
    <property type="entry name" value="BKR_SDR_c"/>
    <property type="match status" value="1"/>
</dbReference>
<dbReference type="FunFam" id="3.40.50.720:FF:000037">
    <property type="entry name" value="3-oxoacyl-[acyl-carrier-protein] reductase FabG"/>
    <property type="match status" value="1"/>
</dbReference>
<dbReference type="Gene3D" id="3.40.50.720">
    <property type="entry name" value="NAD(P)-binding Rossmann-like Domain"/>
    <property type="match status" value="1"/>
</dbReference>
<dbReference type="InterPro" id="IPR011284">
    <property type="entry name" value="3oxo_ACP_reduc"/>
</dbReference>
<dbReference type="InterPro" id="IPR036291">
    <property type="entry name" value="NAD(P)-bd_dom_sf"/>
</dbReference>
<dbReference type="InterPro" id="IPR020904">
    <property type="entry name" value="Sc_DH/Rdtase_CS"/>
</dbReference>
<dbReference type="InterPro" id="IPR050259">
    <property type="entry name" value="SDR"/>
</dbReference>
<dbReference type="InterPro" id="IPR002347">
    <property type="entry name" value="SDR_fam"/>
</dbReference>
<dbReference type="NCBIfam" id="TIGR01830">
    <property type="entry name" value="3oxo_ACP_reduc"/>
    <property type="match status" value="1"/>
</dbReference>
<dbReference type="NCBIfam" id="NF004197">
    <property type="entry name" value="PRK05653.1-1"/>
    <property type="match status" value="1"/>
</dbReference>
<dbReference type="NCBIfam" id="NF005559">
    <property type="entry name" value="PRK07231.1"/>
    <property type="match status" value="1"/>
</dbReference>
<dbReference type="NCBIfam" id="NF009464">
    <property type="entry name" value="PRK12824.1"/>
    <property type="match status" value="1"/>
</dbReference>
<dbReference type="NCBIfam" id="NF009466">
    <property type="entry name" value="PRK12826.1-2"/>
    <property type="match status" value="1"/>
</dbReference>
<dbReference type="PANTHER" id="PTHR42879">
    <property type="entry name" value="3-OXOACYL-(ACYL-CARRIER-PROTEIN) REDUCTASE"/>
    <property type="match status" value="1"/>
</dbReference>
<dbReference type="PANTHER" id="PTHR42879:SF2">
    <property type="entry name" value="3-OXOACYL-[ACYL-CARRIER-PROTEIN] REDUCTASE FABG"/>
    <property type="match status" value="1"/>
</dbReference>
<dbReference type="Pfam" id="PF13561">
    <property type="entry name" value="adh_short_C2"/>
    <property type="match status" value="1"/>
</dbReference>
<dbReference type="PRINTS" id="PR00081">
    <property type="entry name" value="GDHRDH"/>
</dbReference>
<dbReference type="PRINTS" id="PR00080">
    <property type="entry name" value="SDRFAMILY"/>
</dbReference>
<dbReference type="SMART" id="SM00822">
    <property type="entry name" value="PKS_KR"/>
    <property type="match status" value="1"/>
</dbReference>
<dbReference type="SUPFAM" id="SSF51735">
    <property type="entry name" value="NAD(P)-binding Rossmann-fold domains"/>
    <property type="match status" value="1"/>
</dbReference>
<dbReference type="PROSITE" id="PS00061">
    <property type="entry name" value="ADH_SHORT"/>
    <property type="match status" value="1"/>
</dbReference>
<comment type="function">
    <text evidence="1">Catalyzes the NADPH-dependent reduction of beta-ketoacyl-ACP substrates to beta-hydroxyacyl-ACP products, the first reductive step in the elongation cycle of fatty acid biosynthesis.</text>
</comment>
<comment type="catalytic activity">
    <reaction>
        <text>a (3R)-hydroxyacyl-[ACP] + NADP(+) = a 3-oxoacyl-[ACP] + NADPH + H(+)</text>
        <dbReference type="Rhea" id="RHEA:17397"/>
        <dbReference type="Rhea" id="RHEA-COMP:9916"/>
        <dbReference type="Rhea" id="RHEA-COMP:9945"/>
        <dbReference type="ChEBI" id="CHEBI:15378"/>
        <dbReference type="ChEBI" id="CHEBI:57783"/>
        <dbReference type="ChEBI" id="CHEBI:58349"/>
        <dbReference type="ChEBI" id="CHEBI:78776"/>
        <dbReference type="ChEBI" id="CHEBI:78827"/>
        <dbReference type="EC" id="1.1.1.100"/>
    </reaction>
</comment>
<comment type="pathway">
    <text>Lipid metabolism; fatty acid biosynthesis.</text>
</comment>
<comment type="subunit">
    <text evidence="1">Homotetramer.</text>
</comment>
<comment type="similarity">
    <text evidence="3">Belongs to the short-chain dehydrogenases/reductases (SDR) family.</text>
</comment>
<name>FABG_VIBHA</name>
<protein>
    <recommendedName>
        <fullName>3-oxoacyl-[acyl-carrier-protein] reductase FabG</fullName>
        <ecNumber>1.1.1.100</ecNumber>
    </recommendedName>
    <alternativeName>
        <fullName>3-ketoacyl-acyl carrier protein reductase</fullName>
    </alternativeName>
    <alternativeName>
        <fullName>Beta-Ketoacyl-acyl carrier protein reductase</fullName>
    </alternativeName>
    <alternativeName>
        <fullName>Beta-ketoacyl-ACP reductase</fullName>
    </alternativeName>
</protein>
<accession>P55336</accession>
<feature type="chain" id="PRO_0000054695" description="3-oxoacyl-[acyl-carrier-protein] reductase FabG">
    <location>
        <begin position="1"/>
        <end position="244"/>
    </location>
</feature>
<feature type="active site" description="Proton acceptor" evidence="2">
    <location>
        <position position="151"/>
    </location>
</feature>
<feature type="binding site" evidence="1">
    <location>
        <begin position="12"/>
        <end position="15"/>
    </location>
    <ligand>
        <name>NADP(+)</name>
        <dbReference type="ChEBI" id="CHEBI:58349"/>
    </ligand>
</feature>
<feature type="binding site" evidence="1">
    <location>
        <position position="37"/>
    </location>
    <ligand>
        <name>NADP(+)</name>
        <dbReference type="ChEBI" id="CHEBI:58349"/>
    </ligand>
</feature>
<feature type="binding site" evidence="1">
    <location>
        <begin position="59"/>
        <end position="60"/>
    </location>
    <ligand>
        <name>NADP(+)</name>
        <dbReference type="ChEBI" id="CHEBI:58349"/>
    </ligand>
</feature>
<feature type="binding site" evidence="1">
    <location>
        <position position="86"/>
    </location>
    <ligand>
        <name>NADP(+)</name>
        <dbReference type="ChEBI" id="CHEBI:58349"/>
    </ligand>
</feature>
<feature type="binding site" evidence="1">
    <location>
        <position position="138"/>
    </location>
    <ligand>
        <name>substrate</name>
    </ligand>
</feature>
<feature type="binding site" evidence="1">
    <location>
        <begin position="151"/>
        <end position="155"/>
    </location>
    <ligand>
        <name>NADP(+)</name>
        <dbReference type="ChEBI" id="CHEBI:58349"/>
    </ligand>
</feature>
<feature type="binding site" evidence="1">
    <location>
        <position position="184"/>
    </location>
    <ligand>
        <name>NADP(+)</name>
        <dbReference type="ChEBI" id="CHEBI:58349"/>
    </ligand>
</feature>
<gene>
    <name type="primary">fabG</name>
</gene>
<proteinExistence type="inferred from homology"/>
<sequence length="244" mass="25519">MNLEGKIALVTGASRGIGRAIAELLVERGATVIGTATSEGGAAAISEYLGENGKGLALNVTDVESIEATLKTINDECGAIDILVNNAGITRDNLLMRMKDDEWNDIINTNLTPIYRMSKAVLRGMMKKRAGRIINVGSVVGTMGNAGQTNYAAAKAGVIGFTKSMAREVASRGVTVNTVAPGFIETDMTKALNDDQRAATLSNVPAGRLGDPREIASAVVFLASPEAAYITGETLHVNGGMYMV</sequence>
<keyword id="KW-0275">Fatty acid biosynthesis</keyword>
<keyword id="KW-0276">Fatty acid metabolism</keyword>
<keyword id="KW-0444">Lipid biosynthesis</keyword>
<keyword id="KW-0443">Lipid metabolism</keyword>
<keyword id="KW-0521">NADP</keyword>
<keyword id="KW-0560">Oxidoreductase</keyword>
<reference key="1">
    <citation type="journal article" date="1996" name="J. Bacteriol.">
        <title>Isolation of Vibrio harveyi acyl carrier protein and the fabG, acpP, and fabF genes involved in fatty acid biosynthesis.</title>
        <authorList>
            <person name="Shen Z."/>
            <person name="Byers D.M."/>
        </authorList>
    </citation>
    <scope>NUCLEOTIDE SEQUENCE [GENOMIC DNA]</scope>
    <source>
        <strain>ATCC 33843 / NCIMB 1871 / 392 / MAV</strain>
    </source>
</reference>
<organism>
    <name type="scientific">Vibrio harveyi</name>
    <name type="common">Beneckea harveyi</name>
    <dbReference type="NCBI Taxonomy" id="669"/>
    <lineage>
        <taxon>Bacteria</taxon>
        <taxon>Pseudomonadati</taxon>
        <taxon>Pseudomonadota</taxon>
        <taxon>Gammaproteobacteria</taxon>
        <taxon>Vibrionales</taxon>
        <taxon>Vibrionaceae</taxon>
        <taxon>Vibrio</taxon>
    </lineage>
</organism>